<accession>C5D664</accession>
<keyword id="KW-0067">ATP-binding</keyword>
<keyword id="KW-0963">Cytoplasm</keyword>
<keyword id="KW-0275">Fatty acid biosynthesis</keyword>
<keyword id="KW-0276">Fatty acid metabolism</keyword>
<keyword id="KW-0444">Lipid biosynthesis</keyword>
<keyword id="KW-0443">Lipid metabolism</keyword>
<keyword id="KW-0547">Nucleotide-binding</keyword>
<keyword id="KW-0808">Transferase</keyword>
<sequence>MVAELEFEKPLIELRKKISELKEFMKSTDVDLSSEIEKLEARLAKLENDIYANLTPWDRVQIARHPNRPTTLDYIERLFTHFLECHGDRCFGDDEAIVGGIAKYDGLPVTVIGHQRGKDTKENIRRNFGMPHPEGYRKALRLMKQAEKFQRPIICFIDTKGAYPGKAAEERGQSEAIARNLFEMAGLTVPIVCIVIGEGGSGGALALGVGNHIHMLENSTYSVISPEGAAAILWKDASLAQRAAETMKITANDLKELGVIDEIIPEVRGGAHRDVDQQAAEIDKVLKRSLKQLLKLDGETLVQQRYEKFKQIGQFAFSRDDIWVR</sequence>
<name>ACCA_GEOSW</name>
<protein>
    <recommendedName>
        <fullName evidence="1">Acetyl-coenzyme A carboxylase carboxyl transferase subunit alpha</fullName>
        <shortName evidence="1">ACCase subunit alpha</shortName>
        <shortName evidence="1">Acetyl-CoA carboxylase carboxyltransferase subunit alpha</shortName>
        <ecNumber evidence="1">2.1.3.15</ecNumber>
    </recommendedName>
</protein>
<comment type="function">
    <text evidence="1">Component of the acetyl coenzyme A carboxylase (ACC) complex. First, biotin carboxylase catalyzes the carboxylation of biotin on its carrier protein (BCCP) and then the CO(2) group is transferred by the carboxyltransferase to acetyl-CoA to form malonyl-CoA.</text>
</comment>
<comment type="catalytic activity">
    <reaction evidence="1">
        <text>N(6)-carboxybiotinyl-L-lysyl-[protein] + acetyl-CoA = N(6)-biotinyl-L-lysyl-[protein] + malonyl-CoA</text>
        <dbReference type="Rhea" id="RHEA:54728"/>
        <dbReference type="Rhea" id="RHEA-COMP:10505"/>
        <dbReference type="Rhea" id="RHEA-COMP:10506"/>
        <dbReference type="ChEBI" id="CHEBI:57288"/>
        <dbReference type="ChEBI" id="CHEBI:57384"/>
        <dbReference type="ChEBI" id="CHEBI:83144"/>
        <dbReference type="ChEBI" id="CHEBI:83145"/>
        <dbReference type="EC" id="2.1.3.15"/>
    </reaction>
</comment>
<comment type="pathway">
    <text evidence="1">Lipid metabolism; malonyl-CoA biosynthesis; malonyl-CoA from acetyl-CoA: step 1/1.</text>
</comment>
<comment type="subunit">
    <text evidence="1">Acetyl-CoA carboxylase is a heterohexamer composed of biotin carboxyl carrier protein (AccB), biotin carboxylase (AccC) and two subunits each of ACCase subunit alpha (AccA) and ACCase subunit beta (AccD).</text>
</comment>
<comment type="subcellular location">
    <subcellularLocation>
        <location evidence="1">Cytoplasm</location>
    </subcellularLocation>
</comment>
<comment type="similarity">
    <text evidence="1">Belongs to the AccA family.</text>
</comment>
<gene>
    <name evidence="1" type="primary">accA</name>
    <name type="ordered locus">GWCH70_2687</name>
</gene>
<proteinExistence type="inferred from homology"/>
<dbReference type="EC" id="2.1.3.15" evidence="1"/>
<dbReference type="EMBL" id="CP001638">
    <property type="protein sequence ID" value="ACS25380.1"/>
    <property type="molecule type" value="Genomic_DNA"/>
</dbReference>
<dbReference type="SMR" id="C5D664"/>
<dbReference type="STRING" id="471223.GWCH70_2687"/>
<dbReference type="KEGG" id="gwc:GWCH70_2687"/>
<dbReference type="eggNOG" id="COG0825">
    <property type="taxonomic scope" value="Bacteria"/>
</dbReference>
<dbReference type="HOGENOM" id="CLU_015486_0_2_9"/>
<dbReference type="OrthoDB" id="9808023at2"/>
<dbReference type="UniPathway" id="UPA00655">
    <property type="reaction ID" value="UER00711"/>
</dbReference>
<dbReference type="GO" id="GO:0009317">
    <property type="term" value="C:acetyl-CoA carboxylase complex"/>
    <property type="evidence" value="ECO:0007669"/>
    <property type="project" value="InterPro"/>
</dbReference>
<dbReference type="GO" id="GO:0003989">
    <property type="term" value="F:acetyl-CoA carboxylase activity"/>
    <property type="evidence" value="ECO:0007669"/>
    <property type="project" value="InterPro"/>
</dbReference>
<dbReference type="GO" id="GO:0005524">
    <property type="term" value="F:ATP binding"/>
    <property type="evidence" value="ECO:0007669"/>
    <property type="project" value="UniProtKB-KW"/>
</dbReference>
<dbReference type="GO" id="GO:0016743">
    <property type="term" value="F:carboxyl- or carbamoyltransferase activity"/>
    <property type="evidence" value="ECO:0007669"/>
    <property type="project" value="UniProtKB-UniRule"/>
</dbReference>
<dbReference type="GO" id="GO:0006633">
    <property type="term" value="P:fatty acid biosynthetic process"/>
    <property type="evidence" value="ECO:0007669"/>
    <property type="project" value="UniProtKB-KW"/>
</dbReference>
<dbReference type="GO" id="GO:2001295">
    <property type="term" value="P:malonyl-CoA biosynthetic process"/>
    <property type="evidence" value="ECO:0007669"/>
    <property type="project" value="UniProtKB-UniRule"/>
</dbReference>
<dbReference type="Gene3D" id="3.90.226.10">
    <property type="entry name" value="2-enoyl-CoA Hydratase, Chain A, domain 1"/>
    <property type="match status" value="1"/>
</dbReference>
<dbReference type="HAMAP" id="MF_00823">
    <property type="entry name" value="AcetylCoA_CT_alpha"/>
    <property type="match status" value="1"/>
</dbReference>
<dbReference type="InterPro" id="IPR001095">
    <property type="entry name" value="Acetyl_CoA_COase_a_su"/>
</dbReference>
<dbReference type="InterPro" id="IPR029045">
    <property type="entry name" value="ClpP/crotonase-like_dom_sf"/>
</dbReference>
<dbReference type="InterPro" id="IPR011763">
    <property type="entry name" value="COA_CT_C"/>
</dbReference>
<dbReference type="NCBIfam" id="TIGR00513">
    <property type="entry name" value="accA"/>
    <property type="match status" value="1"/>
</dbReference>
<dbReference type="NCBIfam" id="NF041504">
    <property type="entry name" value="AccA_sub"/>
    <property type="match status" value="1"/>
</dbReference>
<dbReference type="NCBIfam" id="NF004344">
    <property type="entry name" value="PRK05724.1"/>
    <property type="match status" value="1"/>
</dbReference>
<dbReference type="PANTHER" id="PTHR42853">
    <property type="entry name" value="ACETYL-COENZYME A CARBOXYLASE CARBOXYL TRANSFERASE SUBUNIT ALPHA"/>
    <property type="match status" value="1"/>
</dbReference>
<dbReference type="PANTHER" id="PTHR42853:SF3">
    <property type="entry name" value="ACETYL-COENZYME A CARBOXYLASE CARBOXYL TRANSFERASE SUBUNIT ALPHA, CHLOROPLASTIC"/>
    <property type="match status" value="1"/>
</dbReference>
<dbReference type="Pfam" id="PF03255">
    <property type="entry name" value="ACCA"/>
    <property type="match status" value="1"/>
</dbReference>
<dbReference type="PRINTS" id="PR01069">
    <property type="entry name" value="ACCCTRFRASEA"/>
</dbReference>
<dbReference type="SUPFAM" id="SSF52096">
    <property type="entry name" value="ClpP/crotonase"/>
    <property type="match status" value="1"/>
</dbReference>
<dbReference type="PROSITE" id="PS50989">
    <property type="entry name" value="COA_CT_CTER"/>
    <property type="match status" value="1"/>
</dbReference>
<reference key="1">
    <citation type="submission" date="2009-06" db="EMBL/GenBank/DDBJ databases">
        <title>Complete sequence of chromosome of Geopacillus sp. WCH70.</title>
        <authorList>
            <consortium name="US DOE Joint Genome Institute"/>
            <person name="Lucas S."/>
            <person name="Copeland A."/>
            <person name="Lapidus A."/>
            <person name="Glavina del Rio T."/>
            <person name="Dalin E."/>
            <person name="Tice H."/>
            <person name="Bruce D."/>
            <person name="Goodwin L."/>
            <person name="Pitluck S."/>
            <person name="Chertkov O."/>
            <person name="Brettin T."/>
            <person name="Detter J.C."/>
            <person name="Han C."/>
            <person name="Larimer F."/>
            <person name="Land M."/>
            <person name="Hauser L."/>
            <person name="Kyrpides N."/>
            <person name="Mikhailova N."/>
            <person name="Brumm P."/>
            <person name="Mead D.A."/>
            <person name="Richardson P."/>
        </authorList>
    </citation>
    <scope>NUCLEOTIDE SEQUENCE [LARGE SCALE GENOMIC DNA]</scope>
    <source>
        <strain>WCH70</strain>
    </source>
</reference>
<feature type="chain" id="PRO_1000213127" description="Acetyl-coenzyme A carboxylase carboxyl transferase subunit alpha">
    <location>
        <begin position="1"/>
        <end position="325"/>
    </location>
</feature>
<feature type="domain" description="CoA carboxyltransferase C-terminal" evidence="2">
    <location>
        <begin position="35"/>
        <end position="292"/>
    </location>
</feature>
<evidence type="ECO:0000255" key="1">
    <source>
        <dbReference type="HAMAP-Rule" id="MF_00823"/>
    </source>
</evidence>
<evidence type="ECO:0000255" key="2">
    <source>
        <dbReference type="PROSITE-ProRule" id="PRU01137"/>
    </source>
</evidence>
<organism>
    <name type="scientific">Geobacillus sp. (strain WCH70)</name>
    <dbReference type="NCBI Taxonomy" id="471223"/>
    <lineage>
        <taxon>Bacteria</taxon>
        <taxon>Bacillati</taxon>
        <taxon>Bacillota</taxon>
        <taxon>Bacilli</taxon>
        <taxon>Bacillales</taxon>
        <taxon>Anoxybacillaceae</taxon>
        <taxon>Geobacillus</taxon>
    </lineage>
</organism>